<evidence type="ECO:0000255" key="1">
    <source>
        <dbReference type="HAMAP-Rule" id="MF_00236"/>
    </source>
</evidence>
<proteinExistence type="inferred from homology"/>
<dbReference type="EMBL" id="AE017197">
    <property type="protein sequence ID" value="AAU04191.1"/>
    <property type="molecule type" value="Genomic_DNA"/>
</dbReference>
<dbReference type="RefSeq" id="WP_011191167.1">
    <property type="nucleotide sequence ID" value="NC_006142.1"/>
</dbReference>
<dbReference type="SMR" id="Q68W01"/>
<dbReference type="KEGG" id="rty:RT0734"/>
<dbReference type="eggNOG" id="COG1826">
    <property type="taxonomic scope" value="Bacteria"/>
</dbReference>
<dbReference type="HOGENOM" id="CLU_086034_6_2_5"/>
<dbReference type="Proteomes" id="UP000000604">
    <property type="component" value="Chromosome"/>
</dbReference>
<dbReference type="GO" id="GO:0033281">
    <property type="term" value="C:TAT protein transport complex"/>
    <property type="evidence" value="ECO:0007669"/>
    <property type="project" value="UniProtKB-UniRule"/>
</dbReference>
<dbReference type="GO" id="GO:0008320">
    <property type="term" value="F:protein transmembrane transporter activity"/>
    <property type="evidence" value="ECO:0007669"/>
    <property type="project" value="UniProtKB-UniRule"/>
</dbReference>
<dbReference type="GO" id="GO:0043953">
    <property type="term" value="P:protein transport by the Tat complex"/>
    <property type="evidence" value="ECO:0007669"/>
    <property type="project" value="UniProtKB-UniRule"/>
</dbReference>
<dbReference type="Gene3D" id="1.20.5.3310">
    <property type="match status" value="1"/>
</dbReference>
<dbReference type="HAMAP" id="MF_00236">
    <property type="entry name" value="TatA_E"/>
    <property type="match status" value="1"/>
</dbReference>
<dbReference type="InterPro" id="IPR003369">
    <property type="entry name" value="TatA/B/E"/>
</dbReference>
<dbReference type="InterPro" id="IPR006312">
    <property type="entry name" value="TatA/E"/>
</dbReference>
<dbReference type="NCBIfam" id="NF002402">
    <property type="entry name" value="PRK01470.1"/>
    <property type="match status" value="1"/>
</dbReference>
<dbReference type="NCBIfam" id="TIGR01411">
    <property type="entry name" value="tatAE"/>
    <property type="match status" value="1"/>
</dbReference>
<dbReference type="PANTHER" id="PTHR42982">
    <property type="entry name" value="SEC-INDEPENDENT PROTEIN TRANSLOCASE PROTEIN TATA"/>
    <property type="match status" value="1"/>
</dbReference>
<dbReference type="PANTHER" id="PTHR42982:SF1">
    <property type="entry name" value="SEC-INDEPENDENT PROTEIN TRANSLOCASE PROTEIN TATA"/>
    <property type="match status" value="1"/>
</dbReference>
<dbReference type="Pfam" id="PF02416">
    <property type="entry name" value="TatA_B_E"/>
    <property type="match status" value="1"/>
</dbReference>
<comment type="function">
    <text evidence="1">Part of the twin-arginine translocation (Tat) system that transports large folded proteins containing a characteristic twin-arginine motif in their signal peptide across membranes. TatA could form the protein-conducting channel of the Tat system.</text>
</comment>
<comment type="subunit">
    <text evidence="1">The Tat system comprises two distinct complexes: a TatABC complex, containing multiple copies of TatA, TatB and TatC subunits, and a separate TatA complex, containing only TatA subunits. Substrates initially bind to the TatABC complex, which probably triggers association of the separate TatA complex to form the active translocon.</text>
</comment>
<comment type="subcellular location">
    <subcellularLocation>
        <location evidence="1">Cell inner membrane</location>
        <topology evidence="1">Single-pass membrane protein</topology>
    </subcellularLocation>
</comment>
<comment type="similarity">
    <text evidence="1">Belongs to the TatA/E family.</text>
</comment>
<organism>
    <name type="scientific">Rickettsia typhi (strain ATCC VR-144 / Wilmington)</name>
    <dbReference type="NCBI Taxonomy" id="257363"/>
    <lineage>
        <taxon>Bacteria</taxon>
        <taxon>Pseudomonadati</taxon>
        <taxon>Pseudomonadota</taxon>
        <taxon>Alphaproteobacteria</taxon>
        <taxon>Rickettsiales</taxon>
        <taxon>Rickettsiaceae</taxon>
        <taxon>Rickettsieae</taxon>
        <taxon>Rickettsia</taxon>
        <taxon>typhus group</taxon>
    </lineage>
</organism>
<reference key="1">
    <citation type="journal article" date="2004" name="J. Bacteriol.">
        <title>Complete genome sequence of Rickettsia typhi and comparison with sequences of other Rickettsiae.</title>
        <authorList>
            <person name="McLeod M.P."/>
            <person name="Qin X."/>
            <person name="Karpathy S.E."/>
            <person name="Gioia J."/>
            <person name="Highlander S.K."/>
            <person name="Fox G.E."/>
            <person name="McNeill T.Z."/>
            <person name="Jiang H."/>
            <person name="Muzny D."/>
            <person name="Jacob L.S."/>
            <person name="Hawes A.C."/>
            <person name="Sodergren E."/>
            <person name="Gill R."/>
            <person name="Hume J."/>
            <person name="Morgan M."/>
            <person name="Fan G."/>
            <person name="Amin A.G."/>
            <person name="Gibbs R.A."/>
            <person name="Hong C."/>
            <person name="Yu X.-J."/>
            <person name="Walker D.H."/>
            <person name="Weinstock G.M."/>
        </authorList>
    </citation>
    <scope>NUCLEOTIDE SEQUENCE [LARGE SCALE GENOMIC DNA]</scope>
    <source>
        <strain>ATCC VR-144 / Wilmington</strain>
    </source>
</reference>
<keyword id="KW-0997">Cell inner membrane</keyword>
<keyword id="KW-1003">Cell membrane</keyword>
<keyword id="KW-0472">Membrane</keyword>
<keyword id="KW-0653">Protein transport</keyword>
<keyword id="KW-0811">Translocation</keyword>
<keyword id="KW-0812">Transmembrane</keyword>
<keyword id="KW-1133">Transmembrane helix</keyword>
<keyword id="KW-0813">Transport</keyword>
<protein>
    <recommendedName>
        <fullName evidence="1">Sec-independent protein translocase protein TatA</fullName>
    </recommendedName>
</protein>
<accession>Q68W01</accession>
<feature type="chain" id="PRO_0000278028" description="Sec-independent protein translocase protein TatA">
    <location>
        <begin position="1"/>
        <end position="53"/>
    </location>
</feature>
<feature type="transmembrane region" description="Helical" evidence="1">
    <location>
        <begin position="1"/>
        <end position="21"/>
    </location>
</feature>
<name>TATA_RICTY</name>
<gene>
    <name evidence="1" type="primary">tatA</name>
    <name type="ordered locus">RT0734</name>
</gene>
<sequence>MGMSFSHLLIVLLIIFVLFGAGKLPQVMSDLAKGLKAFKEGMKDDGNDNDKNE</sequence>